<feature type="chain" id="PRO_0000148964" description="Methionine aminopeptidase B">
    <location>
        <begin position="1"/>
        <end position="274"/>
    </location>
</feature>
<feature type="binding site" evidence="1">
    <location>
        <position position="102"/>
    </location>
    <ligand>
        <name>substrate</name>
    </ligand>
</feature>
<feature type="binding site" evidence="1">
    <location>
        <position position="120"/>
    </location>
    <ligand>
        <name>a divalent metal cation</name>
        <dbReference type="ChEBI" id="CHEBI:60240"/>
        <label>1</label>
    </ligand>
</feature>
<feature type="binding site" evidence="1">
    <location>
        <position position="131"/>
    </location>
    <ligand>
        <name>a divalent metal cation</name>
        <dbReference type="ChEBI" id="CHEBI:60240"/>
        <label>1</label>
    </ligand>
</feature>
<feature type="binding site" evidence="1">
    <location>
        <position position="131"/>
    </location>
    <ligand>
        <name>a divalent metal cation</name>
        <dbReference type="ChEBI" id="CHEBI:60240"/>
        <label>2</label>
        <note>catalytic</note>
    </ligand>
</feature>
<feature type="binding site" evidence="1">
    <location>
        <position position="194"/>
    </location>
    <ligand>
        <name>a divalent metal cation</name>
        <dbReference type="ChEBI" id="CHEBI:60240"/>
        <label>2</label>
        <note>catalytic</note>
    </ligand>
</feature>
<feature type="binding site" evidence="1">
    <location>
        <position position="201"/>
    </location>
    <ligand>
        <name>substrate</name>
    </ligand>
</feature>
<feature type="binding site" evidence="1">
    <location>
        <position position="227"/>
    </location>
    <ligand>
        <name>a divalent metal cation</name>
        <dbReference type="ChEBI" id="CHEBI:60240"/>
        <label>2</label>
        <note>catalytic</note>
    </ligand>
</feature>
<feature type="binding site" evidence="1">
    <location>
        <position position="258"/>
    </location>
    <ligand>
        <name>a divalent metal cation</name>
        <dbReference type="ChEBI" id="CHEBI:60240"/>
        <label>1</label>
    </ligand>
</feature>
<feature type="binding site" evidence="1">
    <location>
        <position position="258"/>
    </location>
    <ligand>
        <name>a divalent metal cation</name>
        <dbReference type="ChEBI" id="CHEBI:60240"/>
        <label>2</label>
        <note>catalytic</note>
    </ligand>
</feature>
<comment type="function">
    <text evidence="1">Removes the N-terminal methionine from nascent proteins. The N-terminal methionine is often cleaved when the second residue in the primary sequence is small and uncharged (Met-Ala-, Cys, Gly, Pro, Ser, Thr, or Val). Requires deformylation of the N(alpha)-formylated initiator methionine before it can be hydrolyzed.</text>
</comment>
<comment type="catalytic activity">
    <reaction evidence="1">
        <text>Release of N-terminal amino acids, preferentially methionine, from peptides and arylamides.</text>
        <dbReference type="EC" id="3.4.11.18"/>
    </reaction>
</comment>
<comment type="cofactor">
    <cofactor evidence="1">
        <name>Co(2+)</name>
        <dbReference type="ChEBI" id="CHEBI:48828"/>
    </cofactor>
    <cofactor evidence="1">
        <name>Zn(2+)</name>
        <dbReference type="ChEBI" id="CHEBI:29105"/>
    </cofactor>
    <cofactor evidence="1">
        <name>Mn(2+)</name>
        <dbReference type="ChEBI" id="CHEBI:29035"/>
    </cofactor>
    <cofactor evidence="1">
        <name>Fe(2+)</name>
        <dbReference type="ChEBI" id="CHEBI:29033"/>
    </cofactor>
    <text evidence="1">Binds 2 divalent metal cations per subunit. Has a high-affinity and a low affinity metal-binding site. The true nature of the physiological cofactor is under debate. The enzyme is active with cobalt, zinc, manganese or divalent iron ions. Most likely, methionine aminopeptidases function as mononuclear Fe(2+)-metalloproteases under physiological conditions, and the catalytically relevant metal-binding site has been assigned to the histidine-containing high-affinity site.</text>
</comment>
<comment type="subunit">
    <text evidence="1">Monomer.</text>
</comment>
<comment type="similarity">
    <text evidence="1">Belongs to the peptidase M24A family. Methionine aminopeptidase type 1 subfamily.</text>
</comment>
<accession>P53580</accession>
<evidence type="ECO:0000255" key="1">
    <source>
        <dbReference type="HAMAP-Rule" id="MF_01974"/>
    </source>
</evidence>
<name>MAP12_SYNY3</name>
<proteinExistence type="inferred from homology"/>
<gene>
    <name type="ordered locus">slr0786</name>
</gene>
<sequence>MNHQNLLSITRNLVHPPISSGLVLLSARELDKMRRVGQLAANLLNHLESMVQPGVSTQALNDEATRWMEDHGAISATLGYAPPGYPPFTGAICTSINEVVCHGIPNPKQILKDGDIINIDVTLRLAGYHGDTSRTFLVGSVSATARKLVEATQESMMRGIAEIKPGARIGDIGAAIQAYAEASGFSVVRDMVGHGIGRQMHTELQIPHYGKRGSGLKLRPGMVFTVEPMLNEGTYELTFLADGWTVITKDKKLSAQFEHTVVVTEEGVEILTLA</sequence>
<organism>
    <name type="scientific">Synechocystis sp. (strain ATCC 27184 / PCC 6803 / Kazusa)</name>
    <dbReference type="NCBI Taxonomy" id="1111708"/>
    <lineage>
        <taxon>Bacteria</taxon>
        <taxon>Bacillati</taxon>
        <taxon>Cyanobacteriota</taxon>
        <taxon>Cyanophyceae</taxon>
        <taxon>Synechococcales</taxon>
        <taxon>Merismopediaceae</taxon>
        <taxon>Synechocystis</taxon>
    </lineage>
</organism>
<dbReference type="EC" id="3.4.11.18" evidence="1"/>
<dbReference type="EMBL" id="BA000022">
    <property type="protein sequence ID" value="BAA10691.1"/>
    <property type="molecule type" value="Genomic_DNA"/>
</dbReference>
<dbReference type="PIR" id="S76999">
    <property type="entry name" value="S76999"/>
</dbReference>
<dbReference type="SMR" id="P53580"/>
<dbReference type="STRING" id="1148.gene:10500195"/>
<dbReference type="MEROPS" id="M24.001"/>
<dbReference type="PaxDb" id="1148-1001810"/>
<dbReference type="EnsemblBacteria" id="BAA10691">
    <property type="protein sequence ID" value="BAA10691"/>
    <property type="gene ID" value="BAA10691"/>
</dbReference>
<dbReference type="KEGG" id="syn:slr0786"/>
<dbReference type="eggNOG" id="COG0024">
    <property type="taxonomic scope" value="Bacteria"/>
</dbReference>
<dbReference type="InParanoid" id="P53580"/>
<dbReference type="PhylomeDB" id="P53580"/>
<dbReference type="Proteomes" id="UP000001425">
    <property type="component" value="Chromosome"/>
</dbReference>
<dbReference type="GO" id="GO:0005829">
    <property type="term" value="C:cytosol"/>
    <property type="evidence" value="ECO:0000318"/>
    <property type="project" value="GO_Central"/>
</dbReference>
<dbReference type="GO" id="GO:0004239">
    <property type="term" value="F:initiator methionyl aminopeptidase activity"/>
    <property type="evidence" value="ECO:0007669"/>
    <property type="project" value="UniProtKB-UniRule"/>
</dbReference>
<dbReference type="GO" id="GO:0046872">
    <property type="term" value="F:metal ion binding"/>
    <property type="evidence" value="ECO:0007669"/>
    <property type="project" value="UniProtKB-UniRule"/>
</dbReference>
<dbReference type="GO" id="GO:0070006">
    <property type="term" value="F:metalloaminopeptidase activity"/>
    <property type="evidence" value="ECO:0000318"/>
    <property type="project" value="GO_Central"/>
</dbReference>
<dbReference type="GO" id="GO:0006508">
    <property type="term" value="P:proteolysis"/>
    <property type="evidence" value="ECO:0007669"/>
    <property type="project" value="UniProtKB-KW"/>
</dbReference>
<dbReference type="CDD" id="cd01086">
    <property type="entry name" value="MetAP1"/>
    <property type="match status" value="1"/>
</dbReference>
<dbReference type="Gene3D" id="3.90.230.10">
    <property type="entry name" value="Creatinase/methionine aminopeptidase superfamily"/>
    <property type="match status" value="1"/>
</dbReference>
<dbReference type="HAMAP" id="MF_01974">
    <property type="entry name" value="MetAP_1"/>
    <property type="match status" value="1"/>
</dbReference>
<dbReference type="InterPro" id="IPR036005">
    <property type="entry name" value="Creatinase/aminopeptidase-like"/>
</dbReference>
<dbReference type="InterPro" id="IPR000994">
    <property type="entry name" value="Pept_M24"/>
</dbReference>
<dbReference type="InterPro" id="IPR001714">
    <property type="entry name" value="Pept_M24_MAP"/>
</dbReference>
<dbReference type="InterPro" id="IPR002467">
    <property type="entry name" value="Pept_M24A_MAP1"/>
</dbReference>
<dbReference type="NCBIfam" id="TIGR00500">
    <property type="entry name" value="met_pdase_I"/>
    <property type="match status" value="1"/>
</dbReference>
<dbReference type="PANTHER" id="PTHR43330">
    <property type="entry name" value="METHIONINE AMINOPEPTIDASE"/>
    <property type="match status" value="1"/>
</dbReference>
<dbReference type="PANTHER" id="PTHR43330:SF27">
    <property type="entry name" value="METHIONINE AMINOPEPTIDASE"/>
    <property type="match status" value="1"/>
</dbReference>
<dbReference type="Pfam" id="PF00557">
    <property type="entry name" value="Peptidase_M24"/>
    <property type="match status" value="1"/>
</dbReference>
<dbReference type="PRINTS" id="PR00599">
    <property type="entry name" value="MAPEPTIDASE"/>
</dbReference>
<dbReference type="SUPFAM" id="SSF55920">
    <property type="entry name" value="Creatinase/aminopeptidase"/>
    <property type="match status" value="1"/>
</dbReference>
<dbReference type="PROSITE" id="PS00680">
    <property type="entry name" value="MAP_1"/>
    <property type="match status" value="1"/>
</dbReference>
<keyword id="KW-0031">Aminopeptidase</keyword>
<keyword id="KW-0378">Hydrolase</keyword>
<keyword id="KW-0479">Metal-binding</keyword>
<keyword id="KW-0645">Protease</keyword>
<keyword id="KW-1185">Reference proteome</keyword>
<reference key="1">
    <citation type="journal article" date="1995" name="DNA Res.">
        <title>Sequence analysis of the genome of the unicellular cyanobacterium Synechocystis sp. strain PCC6803. I. Sequence features in the 1 Mb region from map positions 64% to 92% of the genome.</title>
        <authorList>
            <person name="Kaneko T."/>
            <person name="Tanaka A."/>
            <person name="Sato S."/>
            <person name="Kotani H."/>
            <person name="Sazuka T."/>
            <person name="Miyajima N."/>
            <person name="Sugiura M."/>
            <person name="Tabata S."/>
        </authorList>
    </citation>
    <scope>NUCLEOTIDE SEQUENCE [LARGE SCALE GENOMIC DNA]</scope>
    <source>
        <strain>ATCC 27184 / PCC 6803 / N-1</strain>
    </source>
</reference>
<reference key="2">
    <citation type="journal article" date="1996" name="DNA Res.">
        <title>Sequence analysis of the genome of the unicellular cyanobacterium Synechocystis sp. strain PCC6803. II. Sequence determination of the entire genome and assignment of potential protein-coding regions.</title>
        <authorList>
            <person name="Kaneko T."/>
            <person name="Sato S."/>
            <person name="Kotani H."/>
            <person name="Tanaka A."/>
            <person name="Asamizu E."/>
            <person name="Nakamura Y."/>
            <person name="Miyajima N."/>
            <person name="Hirosawa M."/>
            <person name="Sugiura M."/>
            <person name="Sasamoto S."/>
            <person name="Kimura T."/>
            <person name="Hosouchi T."/>
            <person name="Matsuno A."/>
            <person name="Muraki A."/>
            <person name="Nakazaki N."/>
            <person name="Naruo K."/>
            <person name="Okumura S."/>
            <person name="Shimpo S."/>
            <person name="Takeuchi C."/>
            <person name="Wada T."/>
            <person name="Watanabe A."/>
            <person name="Yamada M."/>
            <person name="Yasuda M."/>
            <person name="Tabata S."/>
        </authorList>
    </citation>
    <scope>NUCLEOTIDE SEQUENCE [LARGE SCALE GENOMIC DNA]</scope>
    <source>
        <strain>ATCC 27184 / PCC 6803 / Kazusa</strain>
    </source>
</reference>
<protein>
    <recommendedName>
        <fullName evidence="1">Methionine aminopeptidase B</fullName>
        <shortName evidence="1">MAP B</shortName>
        <shortName evidence="1">MetAP B</shortName>
        <ecNumber evidence="1">3.4.11.18</ecNumber>
    </recommendedName>
    <alternativeName>
        <fullName evidence="1">Peptidase M</fullName>
    </alternativeName>
</protein>